<name>RS2_SHESM</name>
<keyword id="KW-0687">Ribonucleoprotein</keyword>
<keyword id="KW-0689">Ribosomal protein</keyword>
<dbReference type="EMBL" id="CP000446">
    <property type="protein sequence ID" value="ABI39712.1"/>
    <property type="molecule type" value="Genomic_DNA"/>
</dbReference>
<dbReference type="RefSeq" id="WP_011071784.1">
    <property type="nucleotide sequence ID" value="NC_008321.1"/>
</dbReference>
<dbReference type="SMR" id="Q0HGV5"/>
<dbReference type="GeneID" id="94728753"/>
<dbReference type="KEGG" id="she:Shewmr4_2641"/>
<dbReference type="HOGENOM" id="CLU_040318_1_2_6"/>
<dbReference type="GO" id="GO:0022627">
    <property type="term" value="C:cytosolic small ribosomal subunit"/>
    <property type="evidence" value="ECO:0007669"/>
    <property type="project" value="TreeGrafter"/>
</dbReference>
<dbReference type="GO" id="GO:0003735">
    <property type="term" value="F:structural constituent of ribosome"/>
    <property type="evidence" value="ECO:0007669"/>
    <property type="project" value="InterPro"/>
</dbReference>
<dbReference type="GO" id="GO:0006412">
    <property type="term" value="P:translation"/>
    <property type="evidence" value="ECO:0007669"/>
    <property type="project" value="UniProtKB-UniRule"/>
</dbReference>
<dbReference type="CDD" id="cd01425">
    <property type="entry name" value="RPS2"/>
    <property type="match status" value="1"/>
</dbReference>
<dbReference type="FunFam" id="1.10.287.610:FF:000001">
    <property type="entry name" value="30S ribosomal protein S2"/>
    <property type="match status" value="1"/>
</dbReference>
<dbReference type="Gene3D" id="3.40.50.10490">
    <property type="entry name" value="Glucose-6-phosphate isomerase like protein, domain 1"/>
    <property type="match status" value="1"/>
</dbReference>
<dbReference type="Gene3D" id="1.10.287.610">
    <property type="entry name" value="Helix hairpin bin"/>
    <property type="match status" value="1"/>
</dbReference>
<dbReference type="HAMAP" id="MF_00291_B">
    <property type="entry name" value="Ribosomal_uS2_B"/>
    <property type="match status" value="1"/>
</dbReference>
<dbReference type="InterPro" id="IPR001865">
    <property type="entry name" value="Ribosomal_uS2"/>
</dbReference>
<dbReference type="InterPro" id="IPR005706">
    <property type="entry name" value="Ribosomal_uS2_bac/mit/plastid"/>
</dbReference>
<dbReference type="InterPro" id="IPR018130">
    <property type="entry name" value="Ribosomal_uS2_CS"/>
</dbReference>
<dbReference type="InterPro" id="IPR023591">
    <property type="entry name" value="Ribosomal_uS2_flav_dom_sf"/>
</dbReference>
<dbReference type="NCBIfam" id="TIGR01011">
    <property type="entry name" value="rpsB_bact"/>
    <property type="match status" value="1"/>
</dbReference>
<dbReference type="PANTHER" id="PTHR12534">
    <property type="entry name" value="30S RIBOSOMAL PROTEIN S2 PROKARYOTIC AND ORGANELLAR"/>
    <property type="match status" value="1"/>
</dbReference>
<dbReference type="PANTHER" id="PTHR12534:SF0">
    <property type="entry name" value="SMALL RIBOSOMAL SUBUNIT PROTEIN US2M"/>
    <property type="match status" value="1"/>
</dbReference>
<dbReference type="Pfam" id="PF00318">
    <property type="entry name" value="Ribosomal_S2"/>
    <property type="match status" value="1"/>
</dbReference>
<dbReference type="PRINTS" id="PR00395">
    <property type="entry name" value="RIBOSOMALS2"/>
</dbReference>
<dbReference type="SUPFAM" id="SSF52313">
    <property type="entry name" value="Ribosomal protein S2"/>
    <property type="match status" value="1"/>
</dbReference>
<dbReference type="PROSITE" id="PS00962">
    <property type="entry name" value="RIBOSOMAL_S2_1"/>
    <property type="match status" value="1"/>
</dbReference>
<dbReference type="PROSITE" id="PS00963">
    <property type="entry name" value="RIBOSOMAL_S2_2"/>
    <property type="match status" value="1"/>
</dbReference>
<proteinExistence type="inferred from homology"/>
<gene>
    <name evidence="1" type="primary">rpsB</name>
    <name type="ordered locus">Shewmr4_2641</name>
</gene>
<accession>Q0HGV5</accession>
<protein>
    <recommendedName>
        <fullName evidence="1">Small ribosomal subunit protein uS2</fullName>
    </recommendedName>
    <alternativeName>
        <fullName evidence="2">30S ribosomal protein S2</fullName>
    </alternativeName>
</protein>
<feature type="chain" id="PRO_1000004068" description="Small ribosomal subunit protein uS2">
    <location>
        <begin position="1"/>
        <end position="242"/>
    </location>
</feature>
<organism>
    <name type="scientific">Shewanella sp. (strain MR-4)</name>
    <dbReference type="NCBI Taxonomy" id="60480"/>
    <lineage>
        <taxon>Bacteria</taxon>
        <taxon>Pseudomonadati</taxon>
        <taxon>Pseudomonadota</taxon>
        <taxon>Gammaproteobacteria</taxon>
        <taxon>Alteromonadales</taxon>
        <taxon>Shewanellaceae</taxon>
        <taxon>Shewanella</taxon>
    </lineage>
</organism>
<reference key="1">
    <citation type="submission" date="2006-08" db="EMBL/GenBank/DDBJ databases">
        <title>Complete sequence of Shewanella sp. MR-4.</title>
        <authorList>
            <consortium name="US DOE Joint Genome Institute"/>
            <person name="Copeland A."/>
            <person name="Lucas S."/>
            <person name="Lapidus A."/>
            <person name="Barry K."/>
            <person name="Detter J.C."/>
            <person name="Glavina del Rio T."/>
            <person name="Hammon N."/>
            <person name="Israni S."/>
            <person name="Dalin E."/>
            <person name="Tice H."/>
            <person name="Pitluck S."/>
            <person name="Kiss H."/>
            <person name="Brettin T."/>
            <person name="Bruce D."/>
            <person name="Han C."/>
            <person name="Tapia R."/>
            <person name="Gilna P."/>
            <person name="Schmutz J."/>
            <person name="Larimer F."/>
            <person name="Land M."/>
            <person name="Hauser L."/>
            <person name="Kyrpides N."/>
            <person name="Mikhailova N."/>
            <person name="Nealson K."/>
            <person name="Konstantinidis K."/>
            <person name="Klappenbach J."/>
            <person name="Tiedje J."/>
            <person name="Richardson P."/>
        </authorList>
    </citation>
    <scope>NUCLEOTIDE SEQUENCE [LARGE SCALE GENOMIC DNA]</scope>
    <source>
        <strain>MR-4</strain>
    </source>
</reference>
<comment type="similarity">
    <text evidence="1">Belongs to the universal ribosomal protein uS2 family.</text>
</comment>
<evidence type="ECO:0000255" key="1">
    <source>
        <dbReference type="HAMAP-Rule" id="MF_00291"/>
    </source>
</evidence>
<evidence type="ECO:0000305" key="2"/>
<sequence>MTTVSMRDMLQAGVHFGHQTRYWNPKMKPFIFGARNGVHIINLEHTVPMFNEALAFISNVASKKGKVLFVGTKRAAGEAIKEAAISCDQYYVDHRWLGGMLTNWKTVRQSIKRLKELESQSVDGTFDKLTKKEALMRTRELEKLEKSLGGIKNMGGLPDVLFVIGADHEHIAIKEANNLGIPVVAVVDTNSAPDGVNYIVPGNDDAMRAIRLYTTSVAAAANAGRGQDLAVQAEQDGFVEAE</sequence>